<protein>
    <recommendedName>
        <fullName evidence="1">Formamidase</fullName>
        <ecNumber evidence="1">3.5.1.49</ecNumber>
    </recommendedName>
    <alternativeName>
        <fullName evidence="1">Formamide amidohydrolase</fullName>
    </alternativeName>
</protein>
<organism>
    <name type="scientific">Bradyrhizobium sp. (strain ORS 278)</name>
    <dbReference type="NCBI Taxonomy" id="114615"/>
    <lineage>
        <taxon>Bacteria</taxon>
        <taxon>Pseudomonadati</taxon>
        <taxon>Pseudomonadota</taxon>
        <taxon>Alphaproteobacteria</taxon>
        <taxon>Hyphomicrobiales</taxon>
        <taxon>Nitrobacteraceae</taxon>
        <taxon>Bradyrhizobium</taxon>
    </lineage>
</organism>
<reference key="1">
    <citation type="journal article" date="2007" name="Science">
        <title>Legumes symbioses: absence of nod genes in photosynthetic bradyrhizobia.</title>
        <authorList>
            <person name="Giraud E."/>
            <person name="Moulin L."/>
            <person name="Vallenet D."/>
            <person name="Barbe V."/>
            <person name="Cytryn E."/>
            <person name="Avarre J.-C."/>
            <person name="Jaubert M."/>
            <person name="Simon D."/>
            <person name="Cartieaux F."/>
            <person name="Prin Y."/>
            <person name="Bena G."/>
            <person name="Hannibal L."/>
            <person name="Fardoux J."/>
            <person name="Kojadinovic M."/>
            <person name="Vuillet L."/>
            <person name="Lajus A."/>
            <person name="Cruveiller S."/>
            <person name="Rouy Z."/>
            <person name="Mangenot S."/>
            <person name="Segurens B."/>
            <person name="Dossat C."/>
            <person name="Franck W.L."/>
            <person name="Chang W.-S."/>
            <person name="Saunders E."/>
            <person name="Bruce D."/>
            <person name="Richardson P."/>
            <person name="Normand P."/>
            <person name="Dreyfus B."/>
            <person name="Pignol D."/>
            <person name="Stacey G."/>
            <person name="Emerich D."/>
            <person name="Vermeglio A."/>
            <person name="Medigue C."/>
            <person name="Sadowsky M."/>
        </authorList>
    </citation>
    <scope>NUCLEOTIDE SEQUENCE [LARGE SCALE GENOMIC DNA]</scope>
    <source>
        <strain>ORS 278</strain>
    </source>
</reference>
<evidence type="ECO:0000255" key="1">
    <source>
        <dbReference type="HAMAP-Rule" id="MF_01243"/>
    </source>
</evidence>
<evidence type="ECO:0000255" key="2">
    <source>
        <dbReference type="PROSITE-ProRule" id="PRU00054"/>
    </source>
</evidence>
<proteinExistence type="inferred from homology"/>
<feature type="chain" id="PRO_1000067057" description="Formamidase">
    <location>
        <begin position="1"/>
        <end position="337"/>
    </location>
</feature>
<feature type="domain" description="CN hydrolase" evidence="2">
    <location>
        <begin position="14"/>
        <end position="257"/>
    </location>
</feature>
<feature type="active site" description="Proton acceptor" evidence="1">
    <location>
        <position position="60"/>
    </location>
</feature>
<feature type="active site" description="Proton donor" evidence="1">
    <location>
        <position position="129"/>
    </location>
</feature>
<feature type="active site" description="Nucleophile" evidence="1">
    <location>
        <position position="162"/>
    </location>
</feature>
<comment type="function">
    <text evidence="1">Is an aliphatic amidase with a restricted substrate specificity, as it only hydrolyzes formamide.</text>
</comment>
<comment type="catalytic activity">
    <reaction evidence="1">
        <text>formamide + H2O = formate + NH4(+)</text>
        <dbReference type="Rhea" id="RHEA:21948"/>
        <dbReference type="ChEBI" id="CHEBI:15377"/>
        <dbReference type="ChEBI" id="CHEBI:15740"/>
        <dbReference type="ChEBI" id="CHEBI:16397"/>
        <dbReference type="ChEBI" id="CHEBI:28938"/>
        <dbReference type="EC" id="3.5.1.49"/>
    </reaction>
</comment>
<comment type="similarity">
    <text evidence="1">Belongs to the carbon-nitrogen hydrolase superfamily. Aliphatic amidase family.</text>
</comment>
<gene>
    <name evidence="1" type="primary">amiF</name>
    <name type="ordered locus">BRADO7112</name>
</gene>
<accession>A4Z3G9</accession>
<keyword id="KW-0378">Hydrolase</keyword>
<keyword id="KW-1185">Reference proteome</keyword>
<dbReference type="EC" id="3.5.1.49" evidence="1"/>
<dbReference type="EMBL" id="CU234118">
    <property type="protein sequence ID" value="CAL80695.1"/>
    <property type="molecule type" value="Genomic_DNA"/>
</dbReference>
<dbReference type="RefSeq" id="WP_012030555.1">
    <property type="nucleotide sequence ID" value="NC_009445.1"/>
</dbReference>
<dbReference type="SMR" id="A4Z3G9"/>
<dbReference type="STRING" id="114615.BRADO7112"/>
<dbReference type="KEGG" id="bra:BRADO7112"/>
<dbReference type="eggNOG" id="COG0388">
    <property type="taxonomic scope" value="Bacteria"/>
</dbReference>
<dbReference type="HOGENOM" id="CLU_071797_0_0_5"/>
<dbReference type="OrthoDB" id="9803803at2"/>
<dbReference type="Proteomes" id="UP000001994">
    <property type="component" value="Chromosome"/>
</dbReference>
<dbReference type="GO" id="GO:0004328">
    <property type="term" value="F:formamidase activity"/>
    <property type="evidence" value="ECO:0007669"/>
    <property type="project" value="UniProtKB-UniRule"/>
</dbReference>
<dbReference type="GO" id="GO:0050126">
    <property type="term" value="F:N-carbamoylputrescine amidase activity"/>
    <property type="evidence" value="ECO:0007669"/>
    <property type="project" value="TreeGrafter"/>
</dbReference>
<dbReference type="GO" id="GO:0033388">
    <property type="term" value="P:putrescine biosynthetic process from arginine"/>
    <property type="evidence" value="ECO:0007669"/>
    <property type="project" value="TreeGrafter"/>
</dbReference>
<dbReference type="CDD" id="cd07565">
    <property type="entry name" value="aliphatic_amidase"/>
    <property type="match status" value="1"/>
</dbReference>
<dbReference type="Gene3D" id="3.60.110.10">
    <property type="entry name" value="Carbon-nitrogen hydrolase"/>
    <property type="match status" value="1"/>
</dbReference>
<dbReference type="HAMAP" id="MF_01243">
    <property type="entry name" value="Formamidase"/>
    <property type="match status" value="1"/>
</dbReference>
<dbReference type="InterPro" id="IPR050345">
    <property type="entry name" value="Aliph_Amidase/BUP"/>
</dbReference>
<dbReference type="InterPro" id="IPR003010">
    <property type="entry name" value="C-N_Hydrolase"/>
</dbReference>
<dbReference type="InterPro" id="IPR036526">
    <property type="entry name" value="C-N_Hydrolase_sf"/>
</dbReference>
<dbReference type="InterPro" id="IPR022843">
    <property type="entry name" value="Formamidase"/>
</dbReference>
<dbReference type="NCBIfam" id="NF009803">
    <property type="entry name" value="PRK13287.1"/>
    <property type="match status" value="1"/>
</dbReference>
<dbReference type="PANTHER" id="PTHR43674:SF15">
    <property type="entry name" value="FORMAMIDASE"/>
    <property type="match status" value="1"/>
</dbReference>
<dbReference type="PANTHER" id="PTHR43674">
    <property type="entry name" value="NITRILASE C965.09-RELATED"/>
    <property type="match status" value="1"/>
</dbReference>
<dbReference type="Pfam" id="PF00795">
    <property type="entry name" value="CN_hydrolase"/>
    <property type="match status" value="1"/>
</dbReference>
<dbReference type="SUPFAM" id="SSF56317">
    <property type="entry name" value="Carbon-nitrogen hydrolase"/>
    <property type="match status" value="1"/>
</dbReference>
<dbReference type="PROSITE" id="PS50263">
    <property type="entry name" value="CN_HYDROLASE"/>
    <property type="match status" value="1"/>
</dbReference>
<name>AMIF_BRASO</name>
<sequence length="337" mass="37205">MNGLGGLNKSEHGVVIGLVQLQLPVVVTKEDLAKQTEKIVWMVGKARRNLGTMDLVVFPEYSLHGLSMDTNPEIMCRLDGPEVAAFKQACIDNKIWGCFSIMEYNPDGNPYNSGLIIDSNGEIKLYYRKLHPWIPVEPWEPGDLGIPVIEGPRGAKIALIICHDGMFPEMARECAYKGAEIMIRTAGYTAPIRDSWRFTNQANAFQNLMVTANVCMCGSDGSFDSMGEGMIVNFDGSILAHGTTGRADEIITAEVRPDLVREARIGWGVENNIYQLWHRGYVAVKGGAMDCPYTFMHDMVAGTYRLPWEDQVKITDGTSCGFPAPTRVFGKMAKAAE</sequence>